<proteinExistence type="inferred from homology"/>
<gene>
    <name evidence="1" type="primary">dapD</name>
    <name type="ordered locus">RPA0626</name>
</gene>
<organism>
    <name type="scientific">Rhodopseudomonas palustris (strain ATCC BAA-98 / CGA009)</name>
    <dbReference type="NCBI Taxonomy" id="258594"/>
    <lineage>
        <taxon>Bacteria</taxon>
        <taxon>Pseudomonadati</taxon>
        <taxon>Pseudomonadota</taxon>
        <taxon>Alphaproteobacteria</taxon>
        <taxon>Hyphomicrobiales</taxon>
        <taxon>Nitrobacteraceae</taxon>
        <taxon>Rhodopseudomonas</taxon>
    </lineage>
</organism>
<name>DAPD_RHOPA</name>
<sequence>MPLTALESTINAAFDARDTVTAATQGEIRQAVEDALDLLDQGKVRVAQRDASGAWTVNQWLKKAVLLSFRLNDMGVIAGGPGGANWWDKVPSKFEGWGENRFREAGFRAVPGAIVRRSAFIAKNAVLMPSFVNLGAYVDESTMVDTWATVGSCAQIGKRVHISGGAGIGGVLEPLQAGPVIIEDDCFIGARSEVAEGVIVRKGAVLAMGVFLGASTKIVDRETGEVFVGEVPEYAVLVPGTLPGKPMKNGAPGPATACAVIVKRVDERTRSKTSINELLRD</sequence>
<keyword id="KW-0012">Acyltransferase</keyword>
<keyword id="KW-0028">Amino-acid biosynthesis</keyword>
<keyword id="KW-0963">Cytoplasm</keyword>
<keyword id="KW-0220">Diaminopimelate biosynthesis</keyword>
<keyword id="KW-0457">Lysine biosynthesis</keyword>
<keyword id="KW-0677">Repeat</keyword>
<keyword id="KW-0808">Transferase</keyword>
<accession>Q6NC47</accession>
<reference key="1">
    <citation type="journal article" date="2004" name="Nat. Biotechnol.">
        <title>Complete genome sequence of the metabolically versatile photosynthetic bacterium Rhodopseudomonas palustris.</title>
        <authorList>
            <person name="Larimer F.W."/>
            <person name="Chain P."/>
            <person name="Hauser L."/>
            <person name="Lamerdin J.E."/>
            <person name="Malfatti S."/>
            <person name="Do L."/>
            <person name="Land M.L."/>
            <person name="Pelletier D.A."/>
            <person name="Beatty J.T."/>
            <person name="Lang A.S."/>
            <person name="Tabita F.R."/>
            <person name="Gibson J.L."/>
            <person name="Hanson T.E."/>
            <person name="Bobst C."/>
            <person name="Torres y Torres J.L."/>
            <person name="Peres C."/>
            <person name="Harrison F.H."/>
            <person name="Gibson J."/>
            <person name="Harwood C.S."/>
        </authorList>
    </citation>
    <scope>NUCLEOTIDE SEQUENCE [LARGE SCALE GENOMIC DNA]</scope>
    <source>
        <strain>ATCC BAA-98 / CGA009</strain>
    </source>
</reference>
<comment type="catalytic activity">
    <reaction evidence="1">
        <text>(S)-2,3,4,5-tetrahydrodipicolinate + succinyl-CoA + H2O = (S)-2-succinylamino-6-oxoheptanedioate + CoA</text>
        <dbReference type="Rhea" id="RHEA:17325"/>
        <dbReference type="ChEBI" id="CHEBI:15377"/>
        <dbReference type="ChEBI" id="CHEBI:15685"/>
        <dbReference type="ChEBI" id="CHEBI:16845"/>
        <dbReference type="ChEBI" id="CHEBI:57287"/>
        <dbReference type="ChEBI" id="CHEBI:57292"/>
        <dbReference type="EC" id="2.3.1.117"/>
    </reaction>
</comment>
<comment type="pathway">
    <text evidence="1">Amino-acid biosynthesis; L-lysine biosynthesis via DAP pathway; LL-2,6-diaminopimelate from (S)-tetrahydrodipicolinate (succinylase route): step 1/3.</text>
</comment>
<comment type="subunit">
    <text evidence="1">Homotrimer.</text>
</comment>
<comment type="subcellular location">
    <subcellularLocation>
        <location evidence="1">Cytoplasm</location>
    </subcellularLocation>
</comment>
<comment type="similarity">
    <text evidence="1">Belongs to the transferase hexapeptide repeat family.</text>
</comment>
<dbReference type="EC" id="2.3.1.117" evidence="1"/>
<dbReference type="EMBL" id="BX572594">
    <property type="protein sequence ID" value="CAE26070.1"/>
    <property type="molecule type" value="Genomic_DNA"/>
</dbReference>
<dbReference type="RefSeq" id="WP_011156194.1">
    <property type="nucleotide sequence ID" value="NZ_CP116810.1"/>
</dbReference>
<dbReference type="SMR" id="Q6NC47"/>
<dbReference type="STRING" id="258594.RPA0626"/>
<dbReference type="GeneID" id="66891647"/>
<dbReference type="eggNOG" id="COG2171">
    <property type="taxonomic scope" value="Bacteria"/>
</dbReference>
<dbReference type="HOGENOM" id="CLU_050859_0_1_5"/>
<dbReference type="PhylomeDB" id="Q6NC47"/>
<dbReference type="UniPathway" id="UPA00034">
    <property type="reaction ID" value="UER00019"/>
</dbReference>
<dbReference type="GO" id="GO:0005737">
    <property type="term" value="C:cytoplasm"/>
    <property type="evidence" value="ECO:0007669"/>
    <property type="project" value="UniProtKB-SubCell"/>
</dbReference>
<dbReference type="GO" id="GO:0008666">
    <property type="term" value="F:2,3,4,5-tetrahydropyridine-2,6-dicarboxylate N-succinyltransferase activity"/>
    <property type="evidence" value="ECO:0007669"/>
    <property type="project" value="UniProtKB-UniRule"/>
</dbReference>
<dbReference type="GO" id="GO:0016779">
    <property type="term" value="F:nucleotidyltransferase activity"/>
    <property type="evidence" value="ECO:0007669"/>
    <property type="project" value="TreeGrafter"/>
</dbReference>
<dbReference type="GO" id="GO:0019877">
    <property type="term" value="P:diaminopimelate biosynthetic process"/>
    <property type="evidence" value="ECO:0007669"/>
    <property type="project" value="UniProtKB-UniRule"/>
</dbReference>
<dbReference type="GO" id="GO:0009089">
    <property type="term" value="P:lysine biosynthetic process via diaminopimelate"/>
    <property type="evidence" value="ECO:0007669"/>
    <property type="project" value="UniProtKB-UniRule"/>
</dbReference>
<dbReference type="CDD" id="cd03350">
    <property type="entry name" value="LbH_THP_succinylT"/>
    <property type="match status" value="1"/>
</dbReference>
<dbReference type="Gene3D" id="2.160.10.10">
    <property type="entry name" value="Hexapeptide repeat proteins"/>
    <property type="match status" value="1"/>
</dbReference>
<dbReference type="Gene3D" id="1.10.166.10">
    <property type="entry name" value="Tetrahydrodipicolinate-N-succinyltransferase, N-terminal domain"/>
    <property type="match status" value="1"/>
</dbReference>
<dbReference type="HAMAP" id="MF_00811">
    <property type="entry name" value="DapD"/>
    <property type="match status" value="1"/>
</dbReference>
<dbReference type="InterPro" id="IPR005664">
    <property type="entry name" value="DapD_Trfase_Hexpep_rpt_fam"/>
</dbReference>
<dbReference type="InterPro" id="IPR001451">
    <property type="entry name" value="Hexapep"/>
</dbReference>
<dbReference type="InterPro" id="IPR023180">
    <property type="entry name" value="THP_succinylTrfase_dom1"/>
</dbReference>
<dbReference type="InterPro" id="IPR037133">
    <property type="entry name" value="THP_succinylTrfase_N_sf"/>
</dbReference>
<dbReference type="InterPro" id="IPR011004">
    <property type="entry name" value="Trimer_LpxA-like_sf"/>
</dbReference>
<dbReference type="NCBIfam" id="TIGR00965">
    <property type="entry name" value="dapD"/>
    <property type="match status" value="1"/>
</dbReference>
<dbReference type="NCBIfam" id="NF008808">
    <property type="entry name" value="PRK11830.1"/>
    <property type="match status" value="1"/>
</dbReference>
<dbReference type="PANTHER" id="PTHR19136:SF52">
    <property type="entry name" value="2,3,4,5-TETRAHYDROPYRIDINE-2,6-DICARBOXYLATE N-SUCCINYLTRANSFERASE"/>
    <property type="match status" value="1"/>
</dbReference>
<dbReference type="PANTHER" id="PTHR19136">
    <property type="entry name" value="MOLYBDENUM COFACTOR GUANYLYLTRANSFERASE"/>
    <property type="match status" value="1"/>
</dbReference>
<dbReference type="Pfam" id="PF14602">
    <property type="entry name" value="Hexapep_2"/>
    <property type="match status" value="1"/>
</dbReference>
<dbReference type="Pfam" id="PF14805">
    <property type="entry name" value="THDPS_N_2"/>
    <property type="match status" value="1"/>
</dbReference>
<dbReference type="SUPFAM" id="SSF51161">
    <property type="entry name" value="Trimeric LpxA-like enzymes"/>
    <property type="match status" value="1"/>
</dbReference>
<protein>
    <recommendedName>
        <fullName evidence="1">2,3,4,5-tetrahydropyridine-2,6-dicarboxylate N-succinyltransferase</fullName>
        <ecNumber evidence="1">2.3.1.117</ecNumber>
    </recommendedName>
    <alternativeName>
        <fullName evidence="1">Tetrahydrodipicolinate N-succinyltransferase</fullName>
        <shortName evidence="1">THDP succinyltransferase</shortName>
        <shortName evidence="1">THP succinyltransferase</shortName>
        <shortName evidence="1">Tetrahydropicolinate succinylase</shortName>
    </alternativeName>
</protein>
<feature type="chain" id="PRO_0000196961" description="2,3,4,5-tetrahydropyridine-2,6-dicarboxylate N-succinyltransferase">
    <location>
        <begin position="1"/>
        <end position="281"/>
    </location>
</feature>
<feature type="binding site" evidence="1">
    <location>
        <position position="108"/>
    </location>
    <ligand>
        <name>substrate</name>
    </ligand>
</feature>
<feature type="binding site" evidence="1">
    <location>
        <position position="145"/>
    </location>
    <ligand>
        <name>substrate</name>
    </ligand>
</feature>
<evidence type="ECO:0000255" key="1">
    <source>
        <dbReference type="HAMAP-Rule" id="MF_00811"/>
    </source>
</evidence>